<reference key="1">
    <citation type="journal article" date="2007" name="J. Bacteriol.">
        <title>The genome sequence of avian pathogenic Escherichia coli strain O1:K1:H7 shares strong similarities with human extraintestinal pathogenic E. coli genomes.</title>
        <authorList>
            <person name="Johnson T.J."/>
            <person name="Kariyawasam S."/>
            <person name="Wannemuehler Y."/>
            <person name="Mangiamele P."/>
            <person name="Johnson S.J."/>
            <person name="Doetkott C."/>
            <person name="Skyberg J.A."/>
            <person name="Lynne A.M."/>
            <person name="Johnson J.R."/>
            <person name="Nolan L.K."/>
        </authorList>
    </citation>
    <scope>NUCLEOTIDE SEQUENCE [LARGE SCALE GENOMIC DNA]</scope>
</reference>
<dbReference type="EC" id="2.4.2.52" evidence="1"/>
<dbReference type="EMBL" id="CP000468">
    <property type="protein sequence ID" value="ABJ00032.1"/>
    <property type="molecule type" value="Genomic_DNA"/>
</dbReference>
<dbReference type="RefSeq" id="WP_000062481.1">
    <property type="nucleotide sequence ID" value="NZ_CADILS010000006.1"/>
</dbReference>
<dbReference type="KEGG" id="ecv:APECO1_1438"/>
<dbReference type="HOGENOM" id="CLU_056179_1_0_6"/>
<dbReference type="Proteomes" id="UP000008216">
    <property type="component" value="Chromosome"/>
</dbReference>
<dbReference type="GO" id="GO:0005524">
    <property type="term" value="F:ATP binding"/>
    <property type="evidence" value="ECO:0007669"/>
    <property type="project" value="UniProtKB-KW"/>
</dbReference>
<dbReference type="GO" id="GO:0046917">
    <property type="term" value="F:triphosphoribosyl-dephospho-CoA synthase activity"/>
    <property type="evidence" value="ECO:0007669"/>
    <property type="project" value="UniProtKB-UniRule"/>
</dbReference>
<dbReference type="GO" id="GO:0051191">
    <property type="term" value="P:prosthetic group biosynthetic process"/>
    <property type="evidence" value="ECO:0007669"/>
    <property type="project" value="TreeGrafter"/>
</dbReference>
<dbReference type="FunFam" id="1.10.4200.10:FF:000001">
    <property type="entry name" value="Triphosphoribosyl-dephospho-CoA synthase CitG"/>
    <property type="match status" value="1"/>
</dbReference>
<dbReference type="Gene3D" id="1.10.4200.10">
    <property type="entry name" value="Triphosphoribosyl-dephospho-CoA protein"/>
    <property type="match status" value="1"/>
</dbReference>
<dbReference type="HAMAP" id="MF_00397">
    <property type="entry name" value="CitG"/>
    <property type="match status" value="1"/>
</dbReference>
<dbReference type="InterPro" id="IPR002736">
    <property type="entry name" value="CitG"/>
</dbReference>
<dbReference type="InterPro" id="IPR017551">
    <property type="entry name" value="TriPribosyl-deP-CoA_syn_CitG"/>
</dbReference>
<dbReference type="NCBIfam" id="TIGR03125">
    <property type="entry name" value="citrate_citG"/>
    <property type="match status" value="1"/>
</dbReference>
<dbReference type="NCBIfam" id="NF007503">
    <property type="entry name" value="PRK10096.1"/>
    <property type="match status" value="1"/>
</dbReference>
<dbReference type="PANTHER" id="PTHR30201:SF2">
    <property type="entry name" value="2-(5''-TRIPHOSPHORIBOSYL)-3'-DEPHOSPHOCOENZYME-A SYNTHASE"/>
    <property type="match status" value="1"/>
</dbReference>
<dbReference type="PANTHER" id="PTHR30201">
    <property type="entry name" value="TRIPHOSPHORIBOSYL-DEPHOSPHO-COA SYNTHASE"/>
    <property type="match status" value="1"/>
</dbReference>
<dbReference type="Pfam" id="PF01874">
    <property type="entry name" value="CitG"/>
    <property type="match status" value="1"/>
</dbReference>
<evidence type="ECO:0000255" key="1">
    <source>
        <dbReference type="HAMAP-Rule" id="MF_00397"/>
    </source>
</evidence>
<name>CITG_ECOK1</name>
<organism>
    <name type="scientific">Escherichia coli O1:K1 / APEC</name>
    <dbReference type="NCBI Taxonomy" id="405955"/>
    <lineage>
        <taxon>Bacteria</taxon>
        <taxon>Pseudomonadati</taxon>
        <taxon>Pseudomonadota</taxon>
        <taxon>Gammaproteobacteria</taxon>
        <taxon>Enterobacterales</taxon>
        <taxon>Enterobacteriaceae</taxon>
        <taxon>Escherichia</taxon>
    </lineage>
</organism>
<protein>
    <recommendedName>
        <fullName evidence="1">2-(5''-triphosphoribosyl)-3'-dephosphocoenzyme-A synthase</fullName>
        <shortName evidence="1">2-(5''-triphosphoribosyl)-3'-dephospho-CoA synthase</shortName>
        <ecNumber evidence="1">2.4.2.52</ecNumber>
    </recommendedName>
</protein>
<proteinExistence type="inferred from homology"/>
<feature type="chain" id="PRO_1000049595" description="2-(5''-triphosphoribosyl)-3'-dephosphocoenzyme-A synthase">
    <location>
        <begin position="1"/>
        <end position="292"/>
    </location>
</feature>
<accession>A1A8P2</accession>
<keyword id="KW-0067">ATP-binding</keyword>
<keyword id="KW-0547">Nucleotide-binding</keyword>
<keyword id="KW-1185">Reference proteome</keyword>
<keyword id="KW-0808">Transferase</keyword>
<comment type="function">
    <text evidence="1">Catalyzes the formation of 2-(5''-triphosphoribosyl)-3'-dephosphocoenzyme-A, the precursor of the prosthetic group of the holo-acyl carrier protein (gamma chain) of citrate lyase, from ATP and dephospho-CoA.</text>
</comment>
<comment type="catalytic activity">
    <reaction evidence="1">
        <text>3'-dephospho-CoA + ATP = 2'-(5''-triphospho-alpha-D-ribosyl)-3'-dephospho-CoA + adenine</text>
        <dbReference type="Rhea" id="RHEA:15117"/>
        <dbReference type="ChEBI" id="CHEBI:16708"/>
        <dbReference type="ChEBI" id="CHEBI:30616"/>
        <dbReference type="ChEBI" id="CHEBI:57328"/>
        <dbReference type="ChEBI" id="CHEBI:61378"/>
        <dbReference type="EC" id="2.4.2.52"/>
    </reaction>
</comment>
<comment type="similarity">
    <text evidence="1">Belongs to the CitG/MdcB family.</text>
</comment>
<gene>
    <name evidence="1" type="primary">citG</name>
    <name type="ordered locus">Ecok1_05380</name>
    <name type="ORF">APECO1_1438</name>
</gene>
<sequence>MSMPATSTKTTKLATSLIDEYALLGWRAMLTEVNLSPKPGLVDRINCGAHKDMALEDFHRSALAIQGWLPRFIEFGACSAEMAPEEVLHGLRPIGMACEGDMFRATAGVNTHKGSIFSLGLLCAAIGRLLQLNQSVTPITICATAASFCRGLTDRELRTNNSQLTAGQRLYQQLGLTGARGEAEAGYPLVINHALPHYLTLLDQGLDPELALLDTLLLLMATNGDTNVASRGGEGGLRWLQREAQTLLNNGGIRTPADLDYLRQFDRECIERNISPGGSADLLILTWFLAQI</sequence>